<sequence>MRVSIPPELVSSLGACDLRVTVRGEGIDKYPGGPGAAKQHARKVAMKLGVSSGLIYLVGKPTINWGDSDQPQPFRQRRYFYYLSGADEPDCYLTYDINNDLLVLYVPDFDLHRAIWMGPTLTTDEAERRFDVDKVRYYASLQSDIQSWVGKYNDAAPVYILHSSQQPQFSVQQLHIDDQRLLPAMDAARVVKDDYELRMIRHANKISGLAHRKVLEQIHKMSNEAQIEGLFLDTCVSHGAKNQAYEIIAGSGPNAATLHYVKNNEPLKGRQLVCLDAGAEWECYASDVTRTFPLAADWPSSHARDVYQIVEEMQEQCIKRIKPGVRFRDLQVLAHDIAIRGLQKLGVLKPGTVEEIRVSGASAIFFPHGLGHHVGLEVHDVSEKPITGMGLPNRPCRPDFIPAMSQSVPLLEEGMVVTIEPGVYFSKLALANSRKLPQARYINFDEAEKYIPIGGVRIEDDILVTRTGYENLTTAPKGDEMLEIIRRGIDN</sequence>
<comment type="function">
    <text evidence="1">Catalyzes the removal of a penultimate prolyl residue from the N-termini of peptides.</text>
</comment>
<comment type="catalytic activity">
    <reaction>
        <text>Release of any N-terminal amino acid, including proline, that is linked to proline, even from a dipeptide or tripeptide.</text>
        <dbReference type="EC" id="3.4.11.9"/>
    </reaction>
</comment>
<comment type="cofactor">
    <cofactor evidence="1">
        <name>Mn(2+)</name>
        <dbReference type="ChEBI" id="CHEBI:29035"/>
    </cofactor>
    <text evidence="1">Binds 2 manganese ions per subunit.</text>
</comment>
<comment type="similarity">
    <text evidence="2">Belongs to the peptidase M24B family.</text>
</comment>
<feature type="chain" id="PRO_0000411827" description="Probable Xaa-Pro aminopeptidase An01g13040">
    <location>
        <begin position="1"/>
        <end position="491"/>
    </location>
</feature>
<feature type="binding site" evidence="1">
    <location>
        <position position="276"/>
    </location>
    <ligand>
        <name>Mn(2+)</name>
        <dbReference type="ChEBI" id="CHEBI:29035"/>
        <label>2</label>
    </ligand>
</feature>
<feature type="binding site" evidence="1">
    <location>
        <position position="287"/>
    </location>
    <ligand>
        <name>Mn(2+)</name>
        <dbReference type="ChEBI" id="CHEBI:29035"/>
        <label>1</label>
    </ligand>
</feature>
<feature type="binding site" evidence="1">
    <location>
        <position position="287"/>
    </location>
    <ligand>
        <name>Mn(2+)</name>
        <dbReference type="ChEBI" id="CHEBI:29035"/>
        <label>2</label>
    </ligand>
</feature>
<feature type="binding site" evidence="1">
    <location>
        <position position="420"/>
    </location>
    <ligand>
        <name>Mn(2+)</name>
        <dbReference type="ChEBI" id="CHEBI:29035"/>
        <label>1</label>
    </ligand>
</feature>
<feature type="binding site" evidence="1">
    <location>
        <position position="459"/>
    </location>
    <ligand>
        <name>Mn(2+)</name>
        <dbReference type="ChEBI" id="CHEBI:29035"/>
        <label>1</label>
    </ligand>
</feature>
<feature type="binding site" evidence="1">
    <location>
        <position position="459"/>
    </location>
    <ligand>
        <name>Mn(2+)</name>
        <dbReference type="ChEBI" id="CHEBI:29035"/>
        <label>2</label>
    </ligand>
</feature>
<reference key="1">
    <citation type="journal article" date="2007" name="Nat. Biotechnol.">
        <title>Genome sequencing and analysis of the versatile cell factory Aspergillus niger CBS 513.88.</title>
        <authorList>
            <person name="Pel H.J."/>
            <person name="de Winde J.H."/>
            <person name="Archer D.B."/>
            <person name="Dyer P.S."/>
            <person name="Hofmann G."/>
            <person name="Schaap P.J."/>
            <person name="Turner G."/>
            <person name="de Vries R.P."/>
            <person name="Albang R."/>
            <person name="Albermann K."/>
            <person name="Andersen M.R."/>
            <person name="Bendtsen J.D."/>
            <person name="Benen J.A.E."/>
            <person name="van den Berg M."/>
            <person name="Breestraat S."/>
            <person name="Caddick M.X."/>
            <person name="Contreras R."/>
            <person name="Cornell M."/>
            <person name="Coutinho P.M."/>
            <person name="Danchin E.G.J."/>
            <person name="Debets A.J.M."/>
            <person name="Dekker P."/>
            <person name="van Dijck P.W.M."/>
            <person name="van Dijk A."/>
            <person name="Dijkhuizen L."/>
            <person name="Driessen A.J.M."/>
            <person name="d'Enfert C."/>
            <person name="Geysens S."/>
            <person name="Goosen C."/>
            <person name="Groot G.S.P."/>
            <person name="de Groot P.W.J."/>
            <person name="Guillemette T."/>
            <person name="Henrissat B."/>
            <person name="Herweijer M."/>
            <person name="van den Hombergh J.P.T.W."/>
            <person name="van den Hondel C.A.M.J.J."/>
            <person name="van der Heijden R.T.J.M."/>
            <person name="van der Kaaij R.M."/>
            <person name="Klis F.M."/>
            <person name="Kools H.J."/>
            <person name="Kubicek C.P."/>
            <person name="van Kuyk P.A."/>
            <person name="Lauber J."/>
            <person name="Lu X."/>
            <person name="van der Maarel M.J.E.C."/>
            <person name="Meulenberg R."/>
            <person name="Menke H."/>
            <person name="Mortimer M.A."/>
            <person name="Nielsen J."/>
            <person name="Oliver S.G."/>
            <person name="Olsthoorn M."/>
            <person name="Pal K."/>
            <person name="van Peij N.N.M.E."/>
            <person name="Ram A.F.J."/>
            <person name="Rinas U."/>
            <person name="Roubos J.A."/>
            <person name="Sagt C.M.J."/>
            <person name="Schmoll M."/>
            <person name="Sun J."/>
            <person name="Ussery D."/>
            <person name="Varga J."/>
            <person name="Vervecken W."/>
            <person name="van de Vondervoort P.J.J."/>
            <person name="Wedler H."/>
            <person name="Woesten H.A.B."/>
            <person name="Zeng A.-P."/>
            <person name="van Ooyen A.J.J."/>
            <person name="Visser J."/>
            <person name="Stam H."/>
        </authorList>
    </citation>
    <scope>NUCLEOTIDE SEQUENCE [LARGE SCALE GENOMIC DNA]</scope>
    <source>
        <strain>ATCC MYA-4892 / CBS 513.88 / FGSC A1513</strain>
    </source>
</reference>
<gene>
    <name type="ORF">An01g13040</name>
</gene>
<organism>
    <name type="scientific">Aspergillus niger (strain ATCC MYA-4892 / CBS 513.88 / FGSC A1513)</name>
    <dbReference type="NCBI Taxonomy" id="425011"/>
    <lineage>
        <taxon>Eukaryota</taxon>
        <taxon>Fungi</taxon>
        <taxon>Dikarya</taxon>
        <taxon>Ascomycota</taxon>
        <taxon>Pezizomycotina</taxon>
        <taxon>Eurotiomycetes</taxon>
        <taxon>Eurotiomycetidae</taxon>
        <taxon>Eurotiales</taxon>
        <taxon>Aspergillaceae</taxon>
        <taxon>Aspergillus</taxon>
        <taxon>Aspergillus subgen. Circumdati</taxon>
    </lineage>
</organism>
<proteinExistence type="inferred from homology"/>
<name>AMPP2_ASPNC</name>
<evidence type="ECO:0000250" key="1"/>
<evidence type="ECO:0000305" key="2"/>
<dbReference type="EC" id="3.4.11.9"/>
<dbReference type="EMBL" id="AM269986">
    <property type="protein sequence ID" value="CAK37351.1"/>
    <property type="molecule type" value="Genomic_DNA"/>
</dbReference>
<dbReference type="SMR" id="A2QAW7"/>
<dbReference type="EnsemblFungi" id="CAK37351">
    <property type="protein sequence ID" value="CAK37351"/>
    <property type="gene ID" value="An01g13040"/>
</dbReference>
<dbReference type="HOGENOM" id="CLU_017266_1_2_1"/>
<dbReference type="Proteomes" id="UP000006706">
    <property type="component" value="Chromosome 2R"/>
</dbReference>
<dbReference type="GO" id="GO:0030145">
    <property type="term" value="F:manganese ion binding"/>
    <property type="evidence" value="ECO:0007669"/>
    <property type="project" value="InterPro"/>
</dbReference>
<dbReference type="GO" id="GO:0070006">
    <property type="term" value="F:metalloaminopeptidase activity"/>
    <property type="evidence" value="ECO:0007669"/>
    <property type="project" value="InterPro"/>
</dbReference>
<dbReference type="GO" id="GO:0006508">
    <property type="term" value="P:proteolysis"/>
    <property type="evidence" value="ECO:0007669"/>
    <property type="project" value="UniProtKB-KW"/>
</dbReference>
<dbReference type="CDD" id="cd01087">
    <property type="entry name" value="Prolidase"/>
    <property type="match status" value="1"/>
</dbReference>
<dbReference type="Gene3D" id="3.90.230.10">
    <property type="entry name" value="Creatinase/methionine aminopeptidase superfamily"/>
    <property type="match status" value="1"/>
</dbReference>
<dbReference type="Gene3D" id="3.40.350.10">
    <property type="entry name" value="Creatinase/prolidase N-terminal domain"/>
    <property type="match status" value="1"/>
</dbReference>
<dbReference type="InterPro" id="IPR007865">
    <property type="entry name" value="Aminopep_P_N"/>
</dbReference>
<dbReference type="InterPro" id="IPR029149">
    <property type="entry name" value="Creatin/AminoP/Spt16_N"/>
</dbReference>
<dbReference type="InterPro" id="IPR036005">
    <property type="entry name" value="Creatinase/aminopeptidase-like"/>
</dbReference>
<dbReference type="InterPro" id="IPR000994">
    <property type="entry name" value="Pept_M24"/>
</dbReference>
<dbReference type="InterPro" id="IPR001131">
    <property type="entry name" value="Peptidase_M24B_aminopep-P_CS"/>
</dbReference>
<dbReference type="InterPro" id="IPR052433">
    <property type="entry name" value="X-Pro_dipept-like"/>
</dbReference>
<dbReference type="PANTHER" id="PTHR43226">
    <property type="entry name" value="XAA-PRO AMINOPEPTIDASE 3"/>
    <property type="match status" value="1"/>
</dbReference>
<dbReference type="PANTHER" id="PTHR43226:SF3">
    <property type="entry name" value="XAA-PRO AMINOPEPTIDASE AN0832-RELATED"/>
    <property type="match status" value="1"/>
</dbReference>
<dbReference type="Pfam" id="PF05195">
    <property type="entry name" value="AMP_N"/>
    <property type="match status" value="1"/>
</dbReference>
<dbReference type="Pfam" id="PF00557">
    <property type="entry name" value="Peptidase_M24"/>
    <property type="match status" value="1"/>
</dbReference>
<dbReference type="SMART" id="SM01011">
    <property type="entry name" value="AMP_N"/>
    <property type="match status" value="1"/>
</dbReference>
<dbReference type="SUPFAM" id="SSF55920">
    <property type="entry name" value="Creatinase/aminopeptidase"/>
    <property type="match status" value="1"/>
</dbReference>
<dbReference type="SUPFAM" id="SSF53092">
    <property type="entry name" value="Creatinase/prolidase N-terminal domain"/>
    <property type="match status" value="1"/>
</dbReference>
<dbReference type="PROSITE" id="PS00491">
    <property type="entry name" value="PROLINE_PEPTIDASE"/>
    <property type="match status" value="1"/>
</dbReference>
<keyword id="KW-0031">Aminopeptidase</keyword>
<keyword id="KW-0378">Hydrolase</keyword>
<keyword id="KW-0464">Manganese</keyword>
<keyword id="KW-0479">Metal-binding</keyword>
<keyword id="KW-0482">Metalloprotease</keyword>
<keyword id="KW-0645">Protease</keyword>
<keyword id="KW-1185">Reference proteome</keyword>
<accession>A2QAW7</accession>
<protein>
    <recommendedName>
        <fullName>Probable Xaa-Pro aminopeptidase An01g13040</fullName>
        <ecNumber>3.4.11.9</ecNumber>
    </recommendedName>
    <alternativeName>
        <fullName>Aminoacylproline aminopeptidase</fullName>
    </alternativeName>
    <alternativeName>
        <fullName>Prolidase</fullName>
    </alternativeName>
</protein>